<name>GNPI1_PONAB</name>
<evidence type="ECO:0000250" key="1"/>
<evidence type="ECO:0000250" key="2">
    <source>
        <dbReference type="UniProtKB" id="O88958"/>
    </source>
</evidence>
<evidence type="ECO:0000250" key="3">
    <source>
        <dbReference type="UniProtKB" id="P46926"/>
    </source>
</evidence>
<evidence type="ECO:0000250" key="4">
    <source>
        <dbReference type="UniProtKB" id="Q64422"/>
    </source>
</evidence>
<evidence type="ECO:0000305" key="5"/>
<evidence type="ECO:0000312" key="6">
    <source>
        <dbReference type="Proteomes" id="UP000001595"/>
    </source>
</evidence>
<keyword id="KW-0007">Acetylation</keyword>
<keyword id="KW-0119">Carbohydrate metabolism</keyword>
<keyword id="KW-0963">Cytoplasm</keyword>
<keyword id="KW-0378">Hydrolase</keyword>
<keyword id="KW-0413">Isomerase</keyword>
<keyword id="KW-0597">Phosphoprotein</keyword>
<keyword id="KW-1185">Reference proteome</keyword>
<gene>
    <name evidence="3" type="primary">GNPDA1</name>
    <name evidence="3" type="synonym">GNPI</name>
</gene>
<accession>Q5R8T8</accession>
<feature type="chain" id="PRO_0000160125" description="Glucosamine-6-phosphate deaminase 1">
    <location>
        <begin position="1"/>
        <end position="289"/>
    </location>
</feature>
<feature type="active site" description="Proton acceptor; for enolization step" evidence="1">
    <location>
        <position position="72"/>
    </location>
</feature>
<feature type="active site" description="For ring-opening step" evidence="1">
    <location>
        <position position="141"/>
    </location>
</feature>
<feature type="active site" description="Proton acceptor; for ring-opening step" evidence="1">
    <location>
        <position position="143"/>
    </location>
</feature>
<feature type="active site" description="For ring-opening step" evidence="1">
    <location>
        <position position="148"/>
    </location>
</feature>
<feature type="modified residue" description="N6-acetyllysine" evidence="3">
    <location>
        <position position="64"/>
    </location>
</feature>
<feature type="modified residue" description="Phosphothreonine" evidence="2">
    <location>
        <position position="161"/>
    </location>
</feature>
<reference key="1">
    <citation type="submission" date="2004-11" db="EMBL/GenBank/DDBJ databases">
        <authorList>
            <consortium name="The German cDNA consortium"/>
        </authorList>
    </citation>
    <scope>NUCLEOTIDE SEQUENCE [LARGE SCALE MRNA]</scope>
    <source>
        <tissue>Brain cortex</tissue>
    </source>
</reference>
<proteinExistence type="evidence at transcript level"/>
<organism evidence="6">
    <name type="scientific">Pongo abelii</name>
    <name type="common">Sumatran orangutan</name>
    <name type="synonym">Pongo pygmaeus abelii</name>
    <dbReference type="NCBI Taxonomy" id="9601"/>
    <lineage>
        <taxon>Eukaryota</taxon>
        <taxon>Metazoa</taxon>
        <taxon>Chordata</taxon>
        <taxon>Craniata</taxon>
        <taxon>Vertebrata</taxon>
        <taxon>Euteleostomi</taxon>
        <taxon>Mammalia</taxon>
        <taxon>Eutheria</taxon>
        <taxon>Euarchontoglires</taxon>
        <taxon>Primates</taxon>
        <taxon>Haplorrhini</taxon>
        <taxon>Catarrhini</taxon>
        <taxon>Hominidae</taxon>
        <taxon>Pongo</taxon>
    </lineage>
</organism>
<sequence length="289" mass="32679">MKLIILEHYSQASEWAAKYIRNRIIQFNPGPEKYFTLGLPTGSTPLGCYKKLIEYYKNGDLPFKYVKTFNMDEYVGLPRDHPESYHSFMWNNFFKHIDIHPENTHILDGNAVDLQAECDAFEEKIKAAGGIELFVGGIGPDGHIAFNEPGSSLVSRTRVKTLAMDTILANARFFDGELTKVPTMALTVGVGTVMDAREVMILITGAHKAFALYKAIEEGVNHMWTVSAFQQHPRTVFVCDEDATLELKVKTVKYFKGLMLVHNKLVDPLYSIKEKETEKSQSSKKPYSD</sequence>
<comment type="function">
    <text evidence="3 4">Catalyzes the reversible conversion of alpha-D-glucosamine 6-phosphate (GlcN-6P) into beta-D-fructose 6-phosphate (Fru-6P) and ammonium ion, a regulatory reaction step in de novo uridine diphosphate-N-acetyl-alpha-D-glucosamine (UDP-GlcNAc) biosynthesis via hexosamine pathway. Deamination is coupled to aldo-keto isomerization mediating the metabolic flux from UDP-GlcNAc toward Fru-6P. At high ammonium level can drive amination and isomerization of Fru-6P toward hexosamines and UDP-GlcNAc synthesis (By similarity). Has a role in fine tuning the metabolic fluctuations of cytosolic UDP-GlcNAc and their effects on hyaluronan synthesis that occur during tissue remodeling (By similarity). Seems to trigger calcium oscillations in mammalian eggs. These oscillations serve as the essential trigger for egg activation and early development of the embryo (By similarity).</text>
</comment>
<comment type="catalytic activity">
    <reaction evidence="3">
        <text>alpha-D-glucosamine 6-phosphate + H2O = beta-D-fructose 6-phosphate + NH4(+)</text>
        <dbReference type="Rhea" id="RHEA:12172"/>
        <dbReference type="ChEBI" id="CHEBI:15377"/>
        <dbReference type="ChEBI" id="CHEBI:28938"/>
        <dbReference type="ChEBI" id="CHEBI:57634"/>
        <dbReference type="ChEBI" id="CHEBI:75989"/>
        <dbReference type="EC" id="3.5.99.6"/>
    </reaction>
    <physiologicalReaction direction="left-to-right" evidence="3">
        <dbReference type="Rhea" id="RHEA:12173"/>
    </physiologicalReaction>
    <physiologicalReaction direction="right-to-left" evidence="3">
        <dbReference type="Rhea" id="RHEA:12174"/>
    </physiologicalReaction>
</comment>
<comment type="activity regulation">
    <text evidence="3">Allosterically activated by N-acetylglucosamine-6-phosphate (GlcNAc6P).</text>
</comment>
<comment type="pathway">
    <text evidence="3">Nucleotide-sugar biosynthesis; UDP-N-acetyl-alpha-D-glucosamine biosynthesis; alpha-D-glucosamine 6-phosphate from D-fructose 6-phosphate: step 1/1.</text>
</comment>
<comment type="subunit">
    <text evidence="3">Homohexamer.</text>
</comment>
<comment type="subcellular location">
    <subcellularLocation>
        <location evidence="2">Cytoplasm</location>
    </subcellularLocation>
</comment>
<comment type="similarity">
    <text evidence="5">Belongs to the glucosamine/galactosamine-6-phosphate isomerase family.</text>
</comment>
<protein>
    <recommendedName>
        <fullName evidence="3">Glucosamine-6-phosphate deaminase 1</fullName>
        <shortName>GlcN6P deaminase 1</shortName>
        <ecNumber evidence="3">3.5.99.6</ecNumber>
    </recommendedName>
    <alternativeName>
        <fullName evidence="3">Glucosamine-6-phosphate isomerase 1</fullName>
    </alternativeName>
    <alternativeName>
        <fullName evidence="3">Protein oscillin</fullName>
    </alternativeName>
</protein>
<dbReference type="EC" id="3.5.99.6" evidence="3"/>
<dbReference type="EMBL" id="CR859661">
    <property type="protein sequence ID" value="CAH91822.1"/>
    <property type="molecule type" value="mRNA"/>
</dbReference>
<dbReference type="RefSeq" id="NP_001127467.1">
    <property type="nucleotide sequence ID" value="NM_001133995.2"/>
</dbReference>
<dbReference type="SMR" id="Q5R8T8"/>
<dbReference type="STRING" id="9601.ENSPPYP00000017779"/>
<dbReference type="GeneID" id="100174540"/>
<dbReference type="KEGG" id="pon:100174540"/>
<dbReference type="CTD" id="10007"/>
<dbReference type="eggNOG" id="KOG3148">
    <property type="taxonomic scope" value="Eukaryota"/>
</dbReference>
<dbReference type="InParanoid" id="Q5R8T8"/>
<dbReference type="OrthoDB" id="7663298at2759"/>
<dbReference type="UniPathway" id="UPA00113">
    <property type="reaction ID" value="UER00528"/>
</dbReference>
<dbReference type="Proteomes" id="UP000001595">
    <property type="component" value="Unplaced"/>
</dbReference>
<dbReference type="GO" id="GO:0005737">
    <property type="term" value="C:cytoplasm"/>
    <property type="evidence" value="ECO:0000250"/>
    <property type="project" value="UniProtKB"/>
</dbReference>
<dbReference type="GO" id="GO:0004342">
    <property type="term" value="F:glucosamine-6-phosphate deaminase activity"/>
    <property type="evidence" value="ECO:0000250"/>
    <property type="project" value="UniProtKB"/>
</dbReference>
<dbReference type="GO" id="GO:0042802">
    <property type="term" value="F:identical protein binding"/>
    <property type="evidence" value="ECO:0007669"/>
    <property type="project" value="TreeGrafter"/>
</dbReference>
<dbReference type="GO" id="GO:0016853">
    <property type="term" value="F:isomerase activity"/>
    <property type="evidence" value="ECO:0007669"/>
    <property type="project" value="UniProtKB-KW"/>
</dbReference>
<dbReference type="GO" id="GO:0005975">
    <property type="term" value="P:carbohydrate metabolic process"/>
    <property type="evidence" value="ECO:0007669"/>
    <property type="project" value="InterPro"/>
</dbReference>
<dbReference type="GO" id="GO:0006091">
    <property type="term" value="P:generation of precursor metabolites and energy"/>
    <property type="evidence" value="ECO:0000250"/>
    <property type="project" value="UniProtKB"/>
</dbReference>
<dbReference type="GO" id="GO:0006043">
    <property type="term" value="P:glucosamine catabolic process"/>
    <property type="evidence" value="ECO:0000250"/>
    <property type="project" value="UniProtKB"/>
</dbReference>
<dbReference type="GO" id="GO:0006046">
    <property type="term" value="P:N-acetylglucosamine catabolic process"/>
    <property type="evidence" value="ECO:0007669"/>
    <property type="project" value="TreeGrafter"/>
</dbReference>
<dbReference type="GO" id="GO:0019262">
    <property type="term" value="P:N-acetylneuraminate catabolic process"/>
    <property type="evidence" value="ECO:0007669"/>
    <property type="project" value="TreeGrafter"/>
</dbReference>
<dbReference type="GO" id="GO:0006048">
    <property type="term" value="P:UDP-N-acetylglucosamine biosynthetic process"/>
    <property type="evidence" value="ECO:0000250"/>
    <property type="project" value="UniProtKB"/>
</dbReference>
<dbReference type="CDD" id="cd01399">
    <property type="entry name" value="GlcN6P_deaminase"/>
    <property type="match status" value="1"/>
</dbReference>
<dbReference type="FunFam" id="3.40.50.1360:FF:000004">
    <property type="entry name" value="Glucosamine-6-phosphate isomerase"/>
    <property type="match status" value="1"/>
</dbReference>
<dbReference type="Gene3D" id="3.40.50.1360">
    <property type="match status" value="1"/>
</dbReference>
<dbReference type="HAMAP" id="MF_01241">
    <property type="entry name" value="GlcN6P_deamin"/>
    <property type="match status" value="1"/>
</dbReference>
<dbReference type="InterPro" id="IPR006148">
    <property type="entry name" value="Glc/Gal-6P_isomerase"/>
</dbReference>
<dbReference type="InterPro" id="IPR004547">
    <property type="entry name" value="Glucosamine6P_isomerase"/>
</dbReference>
<dbReference type="InterPro" id="IPR018321">
    <property type="entry name" value="Glucosamine6P_isomerase_CS"/>
</dbReference>
<dbReference type="InterPro" id="IPR037171">
    <property type="entry name" value="NagB/RpiA_transferase-like"/>
</dbReference>
<dbReference type="NCBIfam" id="TIGR00502">
    <property type="entry name" value="nagB"/>
    <property type="match status" value="1"/>
</dbReference>
<dbReference type="PANTHER" id="PTHR11280">
    <property type="entry name" value="GLUCOSAMINE-6-PHOSPHATE ISOMERASE"/>
    <property type="match status" value="1"/>
</dbReference>
<dbReference type="PANTHER" id="PTHR11280:SF8">
    <property type="entry name" value="GLUCOSAMINE-6-PHOSPHATE ISOMERASE 1"/>
    <property type="match status" value="1"/>
</dbReference>
<dbReference type="Pfam" id="PF01182">
    <property type="entry name" value="Glucosamine_iso"/>
    <property type="match status" value="1"/>
</dbReference>
<dbReference type="SUPFAM" id="SSF100950">
    <property type="entry name" value="NagB/RpiA/CoA transferase-like"/>
    <property type="match status" value="1"/>
</dbReference>
<dbReference type="PROSITE" id="PS01161">
    <property type="entry name" value="GLC_GALNAC_ISOMERASE"/>
    <property type="match status" value="1"/>
</dbReference>